<protein>
    <recommendedName>
        <fullName>Putative Xaa-Pro aminopeptidase FRA1</fullName>
        <ecNumber>3.4.11.9</ecNumber>
    </recommendedName>
    <alternativeName>
        <fullName>Fe repressor of activation 1</fullName>
    </alternativeName>
</protein>
<dbReference type="EC" id="3.4.11.9"/>
<dbReference type="EMBL" id="Z73134">
    <property type="protein sequence ID" value="CAA97478.1"/>
    <property type="molecule type" value="Genomic_DNA"/>
</dbReference>
<dbReference type="EMBL" id="BK006945">
    <property type="protein sequence ID" value="DAA09291.1"/>
    <property type="molecule type" value="Genomic_DNA"/>
</dbReference>
<dbReference type="PIR" id="S64780">
    <property type="entry name" value="S64780"/>
</dbReference>
<dbReference type="RefSeq" id="NP_013071.1">
    <property type="nucleotide sequence ID" value="NM_001181849.1"/>
</dbReference>
<dbReference type="SMR" id="Q07825"/>
<dbReference type="BioGRID" id="31223">
    <property type="interactions" value="206"/>
</dbReference>
<dbReference type="DIP" id="DIP-6443N"/>
<dbReference type="FunCoup" id="Q07825">
    <property type="interactions" value="450"/>
</dbReference>
<dbReference type="IntAct" id="Q07825">
    <property type="interactions" value="10"/>
</dbReference>
<dbReference type="MINT" id="Q07825"/>
<dbReference type="STRING" id="4932.YLL029W"/>
<dbReference type="MEROPS" id="M24.A10"/>
<dbReference type="GlyGen" id="Q07825">
    <property type="glycosylation" value="1 site, 1 O-linked glycan (1 site)"/>
</dbReference>
<dbReference type="iPTMnet" id="Q07825"/>
<dbReference type="PaxDb" id="4932-YLL029W"/>
<dbReference type="PeptideAtlas" id="Q07825"/>
<dbReference type="EnsemblFungi" id="YLL029W_mRNA">
    <property type="protein sequence ID" value="YLL029W"/>
    <property type="gene ID" value="YLL029W"/>
</dbReference>
<dbReference type="GeneID" id="850630"/>
<dbReference type="KEGG" id="sce:YLL029W"/>
<dbReference type="AGR" id="SGD:S000003952"/>
<dbReference type="SGD" id="S000003952">
    <property type="gene designation" value="FRA1"/>
</dbReference>
<dbReference type="VEuPathDB" id="FungiDB:YLL029W"/>
<dbReference type="eggNOG" id="KOG2413">
    <property type="taxonomic scope" value="Eukaryota"/>
</dbReference>
<dbReference type="GeneTree" id="ENSGT00940000157716"/>
<dbReference type="HOGENOM" id="CLU_011781_2_6_1"/>
<dbReference type="InParanoid" id="Q07825"/>
<dbReference type="OMA" id="EPGMILS"/>
<dbReference type="OrthoDB" id="9995434at2759"/>
<dbReference type="BioCyc" id="YEAST:G3O-32133-MONOMER"/>
<dbReference type="Reactome" id="R-SCE-163125">
    <property type="pathway name" value="Post-translational modification: synthesis of GPI-anchored proteins"/>
</dbReference>
<dbReference type="BioGRID-ORCS" id="850630">
    <property type="hits" value="0 hits in 10 CRISPR screens"/>
</dbReference>
<dbReference type="PRO" id="PR:Q07825"/>
<dbReference type="Proteomes" id="UP000002311">
    <property type="component" value="Chromosome XII"/>
</dbReference>
<dbReference type="RNAct" id="Q07825">
    <property type="molecule type" value="protein"/>
</dbReference>
<dbReference type="GO" id="GO:0005737">
    <property type="term" value="C:cytoplasm"/>
    <property type="evidence" value="ECO:0007005"/>
    <property type="project" value="SGD"/>
</dbReference>
<dbReference type="GO" id="GO:0005829">
    <property type="term" value="C:cytosol"/>
    <property type="evidence" value="ECO:0000314"/>
    <property type="project" value="SGD"/>
</dbReference>
<dbReference type="GO" id="GO:0046872">
    <property type="term" value="F:metal ion binding"/>
    <property type="evidence" value="ECO:0007669"/>
    <property type="project" value="UniProtKB-KW"/>
</dbReference>
<dbReference type="GO" id="GO:0070006">
    <property type="term" value="F:metalloaminopeptidase activity"/>
    <property type="evidence" value="ECO:0007669"/>
    <property type="project" value="InterPro"/>
</dbReference>
<dbReference type="GO" id="GO:0071281">
    <property type="term" value="P:cellular response to iron ion"/>
    <property type="evidence" value="ECO:0000315"/>
    <property type="project" value="SGD"/>
</dbReference>
<dbReference type="GO" id="GO:0000122">
    <property type="term" value="P:negative regulation of transcription by RNA polymerase II"/>
    <property type="evidence" value="ECO:0000315"/>
    <property type="project" value="SGD"/>
</dbReference>
<dbReference type="GO" id="GO:0006508">
    <property type="term" value="P:proteolysis"/>
    <property type="evidence" value="ECO:0007669"/>
    <property type="project" value="UniProtKB-KW"/>
</dbReference>
<dbReference type="CDD" id="cd01085">
    <property type="entry name" value="APP"/>
    <property type="match status" value="1"/>
</dbReference>
<dbReference type="FunFam" id="3.40.350.10:FF:000015">
    <property type="entry name" value="Xaa-Pro aminopeptidase app-1"/>
    <property type="match status" value="1"/>
</dbReference>
<dbReference type="FunFam" id="3.90.230.10:FF:000007">
    <property type="entry name" value="Xaa-Pro aminopeptidase P"/>
    <property type="match status" value="1"/>
</dbReference>
<dbReference type="Gene3D" id="3.90.230.10">
    <property type="entry name" value="Creatinase/methionine aminopeptidase superfamily"/>
    <property type="match status" value="1"/>
</dbReference>
<dbReference type="Gene3D" id="3.40.350.10">
    <property type="entry name" value="Creatinase/prolidase N-terminal domain"/>
    <property type="match status" value="2"/>
</dbReference>
<dbReference type="InterPro" id="IPR029149">
    <property type="entry name" value="Creatin/AminoP/Spt16_N"/>
</dbReference>
<dbReference type="InterPro" id="IPR036005">
    <property type="entry name" value="Creatinase/aminopeptidase-like"/>
</dbReference>
<dbReference type="InterPro" id="IPR000587">
    <property type="entry name" value="Creatinase_N"/>
</dbReference>
<dbReference type="InterPro" id="IPR000994">
    <property type="entry name" value="Pept_M24"/>
</dbReference>
<dbReference type="InterPro" id="IPR033740">
    <property type="entry name" value="Pept_M24B"/>
</dbReference>
<dbReference type="InterPro" id="IPR032416">
    <property type="entry name" value="Peptidase_M24_C"/>
</dbReference>
<dbReference type="InterPro" id="IPR001131">
    <property type="entry name" value="Peptidase_M24B_aminopep-P_CS"/>
</dbReference>
<dbReference type="InterPro" id="IPR050422">
    <property type="entry name" value="X-Pro_aminopeptidase_P"/>
</dbReference>
<dbReference type="PANTHER" id="PTHR43763">
    <property type="entry name" value="XAA-PRO AMINOPEPTIDASE 1"/>
    <property type="match status" value="1"/>
</dbReference>
<dbReference type="PANTHER" id="PTHR43763:SF6">
    <property type="entry name" value="XAA-PRO AMINOPEPTIDASE 1"/>
    <property type="match status" value="1"/>
</dbReference>
<dbReference type="Pfam" id="PF01321">
    <property type="entry name" value="Creatinase_N"/>
    <property type="match status" value="1"/>
</dbReference>
<dbReference type="Pfam" id="PF16189">
    <property type="entry name" value="Creatinase_N_2"/>
    <property type="match status" value="1"/>
</dbReference>
<dbReference type="Pfam" id="PF00557">
    <property type="entry name" value="Peptidase_M24"/>
    <property type="match status" value="1"/>
</dbReference>
<dbReference type="Pfam" id="PF16188">
    <property type="entry name" value="Peptidase_M24_C"/>
    <property type="match status" value="1"/>
</dbReference>
<dbReference type="SUPFAM" id="SSF55920">
    <property type="entry name" value="Creatinase/aminopeptidase"/>
    <property type="match status" value="1"/>
</dbReference>
<dbReference type="SUPFAM" id="SSF53092">
    <property type="entry name" value="Creatinase/prolidase N-terminal domain"/>
    <property type="match status" value="1"/>
</dbReference>
<dbReference type="PROSITE" id="PS00491">
    <property type="entry name" value="PROLINE_PEPTIDASE"/>
    <property type="match status" value="1"/>
</dbReference>
<accession>Q07825</accession>
<accession>D6VXX5</accession>
<organism>
    <name type="scientific">Saccharomyces cerevisiae (strain ATCC 204508 / S288c)</name>
    <name type="common">Baker's yeast</name>
    <dbReference type="NCBI Taxonomy" id="559292"/>
    <lineage>
        <taxon>Eukaryota</taxon>
        <taxon>Fungi</taxon>
        <taxon>Dikarya</taxon>
        <taxon>Ascomycota</taxon>
        <taxon>Saccharomycotina</taxon>
        <taxon>Saccharomycetes</taxon>
        <taxon>Saccharomycetales</taxon>
        <taxon>Saccharomycetaceae</taxon>
        <taxon>Saccharomyces</taxon>
    </lineage>
</organism>
<reference key="1">
    <citation type="journal article" date="1997" name="Nature">
        <title>The nucleotide sequence of Saccharomyces cerevisiae chromosome XII.</title>
        <authorList>
            <person name="Johnston M."/>
            <person name="Hillier L.W."/>
            <person name="Riles L."/>
            <person name="Albermann K."/>
            <person name="Andre B."/>
            <person name="Ansorge W."/>
            <person name="Benes V."/>
            <person name="Brueckner M."/>
            <person name="Delius H."/>
            <person name="Dubois E."/>
            <person name="Duesterhoeft A."/>
            <person name="Entian K.-D."/>
            <person name="Floeth M."/>
            <person name="Goffeau A."/>
            <person name="Hebling U."/>
            <person name="Heumann K."/>
            <person name="Heuss-Neitzel D."/>
            <person name="Hilbert H."/>
            <person name="Hilger F."/>
            <person name="Kleine K."/>
            <person name="Koetter P."/>
            <person name="Louis E.J."/>
            <person name="Messenguy F."/>
            <person name="Mewes H.-W."/>
            <person name="Miosga T."/>
            <person name="Moestl D."/>
            <person name="Mueller-Auer S."/>
            <person name="Nentwich U."/>
            <person name="Obermaier B."/>
            <person name="Piravandi E."/>
            <person name="Pohl T.M."/>
            <person name="Portetelle D."/>
            <person name="Purnelle B."/>
            <person name="Rechmann S."/>
            <person name="Rieger M."/>
            <person name="Rinke M."/>
            <person name="Rose M."/>
            <person name="Scharfe M."/>
            <person name="Scherens B."/>
            <person name="Scholler P."/>
            <person name="Schwager C."/>
            <person name="Schwarz S."/>
            <person name="Underwood A.P."/>
            <person name="Urrestarazu L.A."/>
            <person name="Vandenbol M."/>
            <person name="Verhasselt P."/>
            <person name="Vierendeels F."/>
            <person name="Voet M."/>
            <person name="Volckaert G."/>
            <person name="Voss H."/>
            <person name="Wambutt R."/>
            <person name="Wedler E."/>
            <person name="Wedler H."/>
            <person name="Zimmermann F.K."/>
            <person name="Zollner A."/>
            <person name="Hani J."/>
            <person name="Hoheisel J.D."/>
        </authorList>
    </citation>
    <scope>NUCLEOTIDE SEQUENCE [LARGE SCALE GENOMIC DNA]</scope>
    <source>
        <strain>ATCC 204508 / S288c</strain>
    </source>
</reference>
<reference key="2">
    <citation type="journal article" date="2014" name="G3 (Bethesda)">
        <title>The reference genome sequence of Saccharomyces cerevisiae: Then and now.</title>
        <authorList>
            <person name="Engel S.R."/>
            <person name="Dietrich F.S."/>
            <person name="Fisk D.G."/>
            <person name="Binkley G."/>
            <person name="Balakrishnan R."/>
            <person name="Costanzo M.C."/>
            <person name="Dwight S.S."/>
            <person name="Hitz B.C."/>
            <person name="Karra K."/>
            <person name="Nash R.S."/>
            <person name="Weng S."/>
            <person name="Wong E.D."/>
            <person name="Lloyd P."/>
            <person name="Skrzypek M.S."/>
            <person name="Miyasato S.R."/>
            <person name="Simison M."/>
            <person name="Cherry J.M."/>
        </authorList>
    </citation>
    <scope>GENOME REANNOTATION</scope>
    <source>
        <strain>ATCC 204508 / S288c</strain>
    </source>
</reference>
<reference key="3">
    <citation type="submission" date="2005-06" db="UniProtKB">
        <authorList>
            <person name="Bienvenut W.V."/>
            <person name="Peters C."/>
        </authorList>
    </citation>
    <scope>PROTEIN SEQUENCE OF 189-199 AND 593-609</scope>
    <scope>IDENTIFICATION BY MASS SPECTROMETRY</scope>
</reference>
<reference key="4">
    <citation type="journal article" date="2003" name="Nature">
        <title>Global analysis of protein localization in budding yeast.</title>
        <authorList>
            <person name="Huh W.-K."/>
            <person name="Falvo J.V."/>
            <person name="Gerke L.C."/>
            <person name="Carroll A.S."/>
            <person name="Howson R.W."/>
            <person name="Weissman J.S."/>
            <person name="O'Shea E.K."/>
        </authorList>
    </citation>
    <scope>SUBCELLULAR LOCATION [LARGE SCALE ANALYSIS]</scope>
</reference>
<reference key="5">
    <citation type="journal article" date="2003" name="Nature">
        <title>Global analysis of protein expression in yeast.</title>
        <authorList>
            <person name="Ghaemmaghami S."/>
            <person name="Huh W.-K."/>
            <person name="Bower K."/>
            <person name="Howson R.W."/>
            <person name="Belle A."/>
            <person name="Dephoure N."/>
            <person name="O'Shea E.K."/>
            <person name="Weissman J.S."/>
        </authorList>
    </citation>
    <scope>LEVEL OF PROTEIN EXPRESSION [LARGE SCALE ANALYSIS]</scope>
</reference>
<reference key="6">
    <citation type="journal article" date="2008" name="J. Biol. Chem.">
        <title>Identification of FRA1 and FRA2 as genes involved in regulating the yeast iron regulon in response to decreased mitochondrial iron-sulfur cluster synthesis.</title>
        <authorList>
            <person name="Kumanovics A."/>
            <person name="Chen O.S."/>
            <person name="Li L."/>
            <person name="Bagley D."/>
            <person name="Adkins E.M."/>
            <person name="Lin H."/>
            <person name="Dingra N.N."/>
            <person name="Outten C.E."/>
            <person name="Keller G."/>
            <person name="Winge D."/>
            <person name="Ward D.M."/>
            <person name="Kaplan J."/>
        </authorList>
    </citation>
    <scope>FUNCTION</scope>
    <scope>INTERACTION WITH FRA2</scope>
</reference>
<reference key="7">
    <citation type="journal article" date="2008" name="Mol. Cell. Proteomics">
        <title>A multidimensional chromatography technology for in-depth phosphoproteome analysis.</title>
        <authorList>
            <person name="Albuquerque C.P."/>
            <person name="Smolka M.B."/>
            <person name="Payne S.H."/>
            <person name="Bafna V."/>
            <person name="Eng J."/>
            <person name="Zhou H."/>
        </authorList>
    </citation>
    <scope>PHOSPHORYLATION [LARGE SCALE ANALYSIS] AT SER-95</scope>
    <scope>IDENTIFICATION BY MASS SPECTROMETRY [LARGE SCALE ANALYSIS]</scope>
</reference>
<reference key="8">
    <citation type="journal article" date="2009" name="Science">
        <title>Global analysis of Cdk1 substrate phosphorylation sites provides insights into evolution.</title>
        <authorList>
            <person name="Holt L.J."/>
            <person name="Tuch B.B."/>
            <person name="Villen J."/>
            <person name="Johnson A.D."/>
            <person name="Gygi S.P."/>
            <person name="Morgan D.O."/>
        </authorList>
    </citation>
    <scope>PHOSPHORYLATION [LARGE SCALE ANALYSIS] AT SER-69; SER-92 AND SER-95</scope>
    <scope>IDENTIFICATION BY MASS SPECTROMETRY [LARGE SCALE ANALYSIS]</scope>
</reference>
<keyword id="KW-0031">Aminopeptidase</keyword>
<keyword id="KW-0963">Cytoplasm</keyword>
<keyword id="KW-0903">Direct protein sequencing</keyword>
<keyword id="KW-0378">Hydrolase</keyword>
<keyword id="KW-0464">Manganese</keyword>
<keyword id="KW-0479">Metal-binding</keyword>
<keyword id="KW-0482">Metalloprotease</keyword>
<keyword id="KW-0597">Phosphoprotein</keyword>
<keyword id="KW-0645">Protease</keyword>
<keyword id="KW-1185">Reference proteome</keyword>
<proteinExistence type="evidence at protein level"/>
<evidence type="ECO:0000250" key="1"/>
<evidence type="ECO:0000255" key="2"/>
<evidence type="ECO:0000256" key="3">
    <source>
        <dbReference type="SAM" id="MobiDB-lite"/>
    </source>
</evidence>
<evidence type="ECO:0000269" key="4">
    <source>
    </source>
</evidence>
<evidence type="ECO:0000269" key="5">
    <source>
    </source>
</evidence>
<evidence type="ECO:0000269" key="6">
    <source>
    </source>
</evidence>
<evidence type="ECO:0000305" key="7"/>
<evidence type="ECO:0007744" key="8">
    <source>
    </source>
</evidence>
<evidence type="ECO:0007744" key="9">
    <source>
    </source>
</evidence>
<comment type="function">
    <text evidence="6">Involved in the regulation of the iron regulon in responss to decreased mitochondrial iron-sulfur cluster synthesis.</text>
</comment>
<comment type="catalytic activity">
    <reaction>
        <text>Release of any N-terminal amino acid, including proline, that is linked to proline, even from a dipeptide or tripeptide.</text>
        <dbReference type="EC" id="3.4.11.9"/>
    </reaction>
</comment>
<comment type="cofactor">
    <cofactor evidence="7">
        <name>Mn(2+)</name>
        <dbReference type="ChEBI" id="CHEBI:29035"/>
    </cofactor>
    <text evidence="7">Binds 2 manganese ions per subunit.</text>
</comment>
<comment type="subunit">
    <text evidence="1 6">Homodimer (By similarity). Interacts with FRA2.</text>
</comment>
<comment type="subcellular location">
    <subcellularLocation>
        <location evidence="4">Cytoplasm</location>
    </subcellularLocation>
</comment>
<comment type="miscellaneous">
    <text evidence="5">Present with 3237 molecules/cell in log phase SD medium.</text>
</comment>
<comment type="similarity">
    <text evidence="7">Belongs to the peptidase M24B family.</text>
</comment>
<feature type="chain" id="PRO_0000185086" description="Putative Xaa-Pro aminopeptidase FRA1">
    <location>
        <begin position="1"/>
        <end position="749"/>
    </location>
</feature>
<feature type="region of interest" description="Disordered" evidence="3">
    <location>
        <begin position="1"/>
        <end position="33"/>
    </location>
</feature>
<feature type="binding site" evidence="2">
    <location>
        <position position="551"/>
    </location>
    <ligand>
        <name>Mn(2+)</name>
        <dbReference type="ChEBI" id="CHEBI:29035"/>
        <label>2</label>
    </ligand>
</feature>
<feature type="binding site" evidence="2">
    <location>
        <position position="562"/>
    </location>
    <ligand>
        <name>Mn(2+)</name>
        <dbReference type="ChEBI" id="CHEBI:29035"/>
        <label>1</label>
    </ligand>
</feature>
<feature type="binding site" evidence="2">
    <location>
        <position position="562"/>
    </location>
    <ligand>
        <name>Mn(2+)</name>
        <dbReference type="ChEBI" id="CHEBI:29035"/>
        <label>2</label>
    </ligand>
</feature>
<feature type="binding site" evidence="2">
    <location>
        <position position="660"/>
    </location>
    <ligand>
        <name>Mn(2+)</name>
        <dbReference type="ChEBI" id="CHEBI:29035"/>
        <label>1</label>
    </ligand>
</feature>
<feature type="binding site" evidence="2">
    <location>
        <position position="674"/>
    </location>
    <ligand>
        <name>Mn(2+)</name>
        <dbReference type="ChEBI" id="CHEBI:29035"/>
        <label>1</label>
    </ligand>
</feature>
<feature type="binding site" evidence="2">
    <location>
        <position position="674"/>
    </location>
    <ligand>
        <name>Mn(2+)</name>
        <dbReference type="ChEBI" id="CHEBI:29035"/>
        <label>2</label>
    </ligand>
</feature>
<feature type="modified residue" description="Phosphoserine" evidence="9">
    <location>
        <position position="69"/>
    </location>
</feature>
<feature type="modified residue" description="Phosphoserine" evidence="9">
    <location>
        <position position="92"/>
    </location>
</feature>
<feature type="modified residue" description="Phosphoserine" evidence="8 9">
    <location>
        <position position="95"/>
    </location>
</feature>
<name>FRA1_YEAST</name>
<sequence length="749" mass="84924">MTSKPSTSDGRAHSISHVPGTHMRGTSASHSPRPFRPCADCTCSPGLLSRQGRRASLFLRQLENSRRSSSMLLNELKGAGGGSSAGNGSVYSCDSLCAVNREVNTTDRLLKLRQEMKKHDLCCYIVPSCDEHQSEYVSLRDQRRAFISGFSGSAGVACITRDLLNFNDDHPDGKSILSTDGRYFNQARQELDYNWTLLRQNEDPITWQEWCVREALEMAKGLGNKEGMVLKIGIDPKLITFNDYVSFRKMIDTKYDAKGKVELVPVEENLVDSIWPDFETLPERPCNDLLLLKYEFHGEEFKDKKEKLLKKLNDKASSATTGRNTFIVVALDEICWLLNLRGSDIDYNPVFFSYVAINEDETILFTNNPFNDDISEYFKINGIEVRPYEQIWEHLTKITSQASSAEHEFLIPDSASWQMVRCLNTSTNANGAIAKKMTAQNFAIIHSPIDVLKSIKNDIEIKNAHKAQVKDAVCLVQYFAWLEQQLVGREALIDEYRAAEKLTEIRKTQRNFMGNSFETISSTGSNAAIIHYSPPVENSSMIDPTKIYLCDSGSQFLEGTTDITRTIHLTKPTKEEMDNYTLVLKGGLALERLIFPENTPGFNIDAIARQFLWSRGLDYKHGTGHGIGSFLNVHEGPMGVGFRPHLMNFPLRAGNIISNEPGYYKDGEYGIRIESDMLIKKATEKGNFLKFENMTVVPYCRKLINTKLLNEEEKTQINEYHARVWRTIVHFLQPQSISYKWLKRETSPL</sequence>
<gene>
    <name type="primary">FRA1</name>
    <name type="ordered locus">YLL029W</name>
</gene>